<accession>P26104</accession>
<organism>
    <name type="scientific">Influenza A virus (strain A/Budgerigar/Hokkaido/1/1977 H4N6)</name>
    <dbReference type="NCBI Taxonomy" id="385587"/>
    <lineage>
        <taxon>Viruses</taxon>
        <taxon>Riboviria</taxon>
        <taxon>Orthornavirae</taxon>
        <taxon>Negarnaviricota</taxon>
        <taxon>Polyploviricotina</taxon>
        <taxon>Insthoviricetes</taxon>
        <taxon>Articulavirales</taxon>
        <taxon>Orthomyxoviridae</taxon>
        <taxon>Alphainfluenzavirus</taxon>
        <taxon>Alphainfluenzavirus influenzae</taxon>
        <taxon>Influenza A virus</taxon>
    </lineage>
</organism>
<organismHost>
    <name type="scientific">Aves</name>
    <dbReference type="NCBI Taxonomy" id="8782"/>
</organismHost>
<organismHost>
    <name type="scientific">Sus scrofa</name>
    <name type="common">Pig</name>
    <dbReference type="NCBI Taxonomy" id="9823"/>
</organismHost>
<gene>
    <name evidence="1" type="primary">PB2</name>
</gene>
<feature type="chain" id="PRO_0000078813" description="Polymerase basic protein 2">
    <location>
        <begin position="1"/>
        <end position="759"/>
    </location>
</feature>
<feature type="short sequence motif" description="Nuclear localization signal" evidence="1">
    <location>
        <begin position="736"/>
        <end position="739"/>
    </location>
</feature>
<feature type="site" description="Avian adaptation" evidence="1">
    <location>
        <position position="627"/>
    </location>
</feature>
<protein>
    <recommendedName>
        <fullName evidence="1">Polymerase basic protein 2</fullName>
    </recommendedName>
    <alternativeName>
        <fullName evidence="1">RNA-directed RNA polymerase subunit P3</fullName>
    </alternativeName>
</protein>
<proteinExistence type="inferred from homology"/>
<reference key="1">
    <citation type="journal article" date="1990" name="J. Virol.">
        <title>Evolution of influenza A virus PB2 genes: implications for evolution of the ribonucleoprotein complex and origin of human influenza A virus.</title>
        <authorList>
            <person name="Gorman O.T."/>
            <person name="Donis R.O."/>
            <person name="Kawaoka Y."/>
            <person name="Webster R.G."/>
        </authorList>
    </citation>
    <scope>NUCLEOTIDE SEQUENCE [GENOMIC RNA]</scope>
</reference>
<keyword id="KW-1157">Cap snatching</keyword>
<keyword id="KW-1262">Eukaryotic host gene expression shutoff by virus</keyword>
<keyword id="KW-1191">Eukaryotic host transcription shutoff by virus</keyword>
<keyword id="KW-1190">Host gene expression shutoff by virus</keyword>
<keyword id="KW-1048">Host nucleus</keyword>
<keyword id="KW-0945">Host-virus interaction</keyword>
<keyword id="KW-1104">Inhibition of host RNA polymerase II by virus</keyword>
<keyword id="KW-0506">mRNA capping</keyword>
<keyword id="KW-0507">mRNA processing</keyword>
<keyword id="KW-1195">Viral transcription</keyword>
<keyword id="KW-0946">Virion</keyword>
<evidence type="ECO:0000255" key="1">
    <source>
        <dbReference type="HAMAP-Rule" id="MF_04062"/>
    </source>
</evidence>
<name>PB2_I77AG</name>
<comment type="function">
    <text evidence="1">Plays an essential role in transcription initiation and cap-stealing mechanism, in which cellular capped pre-mRNAs are used to generate primers for viral transcription. Recognizes and binds the 7-methylguanosine-containing cap of the target pre-RNA which is subsequently cleaved after 10-13 nucleotides by the viral protein PA. Plays a role in the initiation of the viral genome replication and modulates the activity of the ribonucleoprotein (RNP) complex.</text>
</comment>
<comment type="subunit">
    <text evidence="1">Influenza RNA polymerase is composed of three subunits: PB1, PB2 and PA. Interacts (via N-terminus) with PB1 (via C-terminus). Interacts with nucleoprotein NP (via N-terminus).</text>
</comment>
<comment type="subcellular location">
    <subcellularLocation>
        <location evidence="1">Virion</location>
    </subcellularLocation>
    <subcellularLocation>
        <location evidence="1">Host nucleus</location>
    </subcellularLocation>
</comment>
<comment type="similarity">
    <text evidence="1">Belongs to the influenza viruses PB2 family.</text>
</comment>
<sequence>MERIKGLRDLMSQSRTREILTKTTVDHMAIIKKYTSGRQEKNPALRMKWMMAMKYPITADKRIMEMIPERNEQGQTLWSKTNDAGSDRVMVSPLAVTWWNRNGPTTSTIHYPKVYKTYFEKVERLRHGTFGPVHFRNQVKIRRRVDINPGHADLSAKEAQDVIMEVVFPNEVGAKILTSESQLTITKEKKEELQDCKIAPLMVAYMLERELVRKTRFLPVAGGTSSVYIEVLHLTQGTCWEQMYTPGGEVRNDDVDQSLIIAARNIVRRATVSTDPLSSLLEMCHSTQIGGVRMVDILRQNPTEEQAVDICKAAMGLRISSSFSFGGFTFKRTSGSSVKREEEILTGNLQTLKIRVHEGYEEFTMVGRRATAILRKATRRLIQLIVSGRDEQSIAEAIIVAMVFSQDDCMIKAVRGDLNFVNRANQRLNPMHQLLRHFQKDAKVLFQNWGIEPIDNVMGMIGILPDMTPSTEMSLRGVRVSKMGVDEYSSTERVVVSIDRFLRVRDQRGNVLLSPEEVSETQGTEKLTITYSSSMMWEINGSESVLVNTYQWIIRNWETVKIQWSQDPTMLYNKMEFEPFQSLVPKAARGKYSGFVRTLFQQMRDVLGTFDTVQIIKLLPFAAAPPEQSRMQFSSLTVNVRGSGMRILVRGNSPVFNYNKATKRLTVLGKDAGALTEDPDEGTAGVESAVLRGFLILGKEDKRYGPALSINELSNLAKGEKANVLIGQGDVVLVMKRKRDSSILTDSQTATKRLRMAIN</sequence>
<dbReference type="EMBL" id="M73523">
    <property type="protein sequence ID" value="AAA43137.1"/>
    <property type="molecule type" value="Genomic_RNA"/>
</dbReference>
<dbReference type="SMR" id="P26104"/>
<dbReference type="GO" id="GO:0042025">
    <property type="term" value="C:host cell nucleus"/>
    <property type="evidence" value="ECO:0007669"/>
    <property type="project" value="UniProtKB-SubCell"/>
</dbReference>
<dbReference type="GO" id="GO:0044423">
    <property type="term" value="C:virion component"/>
    <property type="evidence" value="ECO:0007669"/>
    <property type="project" value="UniProtKB-UniRule"/>
</dbReference>
<dbReference type="GO" id="GO:0003723">
    <property type="term" value="F:RNA binding"/>
    <property type="evidence" value="ECO:0007669"/>
    <property type="project" value="UniProtKB-UniRule"/>
</dbReference>
<dbReference type="GO" id="GO:0003968">
    <property type="term" value="F:RNA-directed RNA polymerase activity"/>
    <property type="evidence" value="ECO:0007669"/>
    <property type="project" value="UniProtKB-UniRule"/>
</dbReference>
<dbReference type="GO" id="GO:0006370">
    <property type="term" value="P:7-methylguanosine mRNA capping"/>
    <property type="evidence" value="ECO:0007669"/>
    <property type="project" value="UniProtKB-UniRule"/>
</dbReference>
<dbReference type="GO" id="GO:0075526">
    <property type="term" value="P:cap snatching"/>
    <property type="evidence" value="ECO:0007669"/>
    <property type="project" value="UniProtKB-UniRule"/>
</dbReference>
<dbReference type="GO" id="GO:0006351">
    <property type="term" value="P:DNA-templated transcription"/>
    <property type="evidence" value="ECO:0007669"/>
    <property type="project" value="UniProtKB-UniRule"/>
</dbReference>
<dbReference type="GO" id="GO:0039657">
    <property type="term" value="P:symbiont-mediated suppression of host gene expression"/>
    <property type="evidence" value="ECO:0007669"/>
    <property type="project" value="UniProtKB-KW"/>
</dbReference>
<dbReference type="GO" id="GO:0039523">
    <property type="term" value="P:symbiont-mediated suppression of host mRNA transcription via inhibition of RNA polymerase II activity"/>
    <property type="evidence" value="ECO:0007669"/>
    <property type="project" value="UniProtKB-UniRule"/>
</dbReference>
<dbReference type="GO" id="GO:0039694">
    <property type="term" value="P:viral RNA genome replication"/>
    <property type="evidence" value="ECO:0007669"/>
    <property type="project" value="InterPro"/>
</dbReference>
<dbReference type="FunFam" id="3.30.30.90:FF:000001">
    <property type="entry name" value="Polymerase basic protein 2"/>
    <property type="match status" value="1"/>
</dbReference>
<dbReference type="Gene3D" id="3.30.30.90">
    <property type="entry name" value="Polymerase Basic Protein 2, C-terminal domain"/>
    <property type="match status" value="1"/>
</dbReference>
<dbReference type="HAMAP" id="MF_04062">
    <property type="entry name" value="INV_PB2"/>
    <property type="match status" value="1"/>
</dbReference>
<dbReference type="InterPro" id="IPR049110">
    <property type="entry name" value="Flu_PB2_2nd"/>
</dbReference>
<dbReference type="InterPro" id="IPR049114">
    <property type="entry name" value="Flu_PB2_6th"/>
</dbReference>
<dbReference type="InterPro" id="IPR049115">
    <property type="entry name" value="Flu_PB2_C"/>
</dbReference>
<dbReference type="InterPro" id="IPR048298">
    <property type="entry name" value="Flu_PB2_CAP-bd"/>
</dbReference>
<dbReference type="InterPro" id="IPR049111">
    <property type="entry name" value="Flu_PB2_middle"/>
</dbReference>
<dbReference type="InterPro" id="IPR049106">
    <property type="entry name" value="Flu_PB2_N"/>
</dbReference>
<dbReference type="InterPro" id="IPR001591">
    <property type="entry name" value="INV_PB2"/>
</dbReference>
<dbReference type="InterPro" id="IPR049113">
    <property type="entry name" value="PB2_helical"/>
</dbReference>
<dbReference type="InterPro" id="IPR037258">
    <property type="entry name" value="PDB2_C"/>
</dbReference>
<dbReference type="Pfam" id="PF20947">
    <property type="entry name" value="Flu_PB2_1st"/>
    <property type="match status" value="1"/>
</dbReference>
<dbReference type="Pfam" id="PF20948">
    <property type="entry name" value="Flu_PB2_2nd"/>
    <property type="match status" value="1"/>
</dbReference>
<dbReference type="Pfam" id="PF20949">
    <property type="entry name" value="Flu_PB2_3rd"/>
    <property type="match status" value="1"/>
</dbReference>
<dbReference type="Pfam" id="PF20950">
    <property type="entry name" value="Flu_PB2_4th"/>
    <property type="match status" value="1"/>
</dbReference>
<dbReference type="Pfam" id="PF00604">
    <property type="entry name" value="Flu_PB2_5th"/>
    <property type="match status" value="1"/>
</dbReference>
<dbReference type="Pfam" id="PF20951">
    <property type="entry name" value="Flu_PB2_6th"/>
    <property type="match status" value="1"/>
</dbReference>
<dbReference type="Pfam" id="PF20952">
    <property type="entry name" value="Flu_PB2_7th"/>
    <property type="match status" value="1"/>
</dbReference>
<dbReference type="SUPFAM" id="SSF160453">
    <property type="entry name" value="PB2 C-terminal domain-like"/>
    <property type="match status" value="1"/>
</dbReference>